<evidence type="ECO:0000255" key="1">
    <source>
        <dbReference type="HAMAP-Rule" id="MF_01274"/>
    </source>
</evidence>
<keyword id="KW-0067">ATP-binding</keyword>
<keyword id="KW-0173">Coenzyme A biosynthesis</keyword>
<keyword id="KW-0963">Cytoplasm</keyword>
<keyword id="KW-0418">Kinase</keyword>
<keyword id="KW-0479">Metal-binding</keyword>
<keyword id="KW-0547">Nucleotide-binding</keyword>
<keyword id="KW-0630">Potassium</keyword>
<keyword id="KW-0808">Transferase</keyword>
<organism>
    <name type="scientific">Listeria monocytogenes serotype 4b (strain F2365)</name>
    <dbReference type="NCBI Taxonomy" id="265669"/>
    <lineage>
        <taxon>Bacteria</taxon>
        <taxon>Bacillati</taxon>
        <taxon>Bacillota</taxon>
        <taxon>Bacilli</taxon>
        <taxon>Bacillales</taxon>
        <taxon>Listeriaceae</taxon>
        <taxon>Listeria</taxon>
    </lineage>
</organism>
<reference key="1">
    <citation type="journal article" date="2004" name="Nucleic Acids Res.">
        <title>Whole genome comparisons of serotype 4b and 1/2a strains of the food-borne pathogen Listeria monocytogenes reveal new insights into the core genome components of this species.</title>
        <authorList>
            <person name="Nelson K.E."/>
            <person name="Fouts D.E."/>
            <person name="Mongodin E.F."/>
            <person name="Ravel J."/>
            <person name="DeBoy R.T."/>
            <person name="Kolonay J.F."/>
            <person name="Rasko D.A."/>
            <person name="Angiuoli S.V."/>
            <person name="Gill S.R."/>
            <person name="Paulsen I.T."/>
            <person name="Peterson J.D."/>
            <person name="White O."/>
            <person name="Nelson W.C."/>
            <person name="Nierman W.C."/>
            <person name="Beanan M.J."/>
            <person name="Brinkac L.M."/>
            <person name="Daugherty S.C."/>
            <person name="Dodson R.J."/>
            <person name="Durkin A.S."/>
            <person name="Madupu R."/>
            <person name="Haft D.H."/>
            <person name="Selengut J."/>
            <person name="Van Aken S.E."/>
            <person name="Khouri H.M."/>
            <person name="Fedorova N."/>
            <person name="Forberger H.A."/>
            <person name="Tran B."/>
            <person name="Kathariou S."/>
            <person name="Wonderling L.D."/>
            <person name="Uhlich G.A."/>
            <person name="Bayles D.O."/>
            <person name="Luchansky J.B."/>
            <person name="Fraser C.M."/>
        </authorList>
    </citation>
    <scope>NUCLEOTIDE SEQUENCE [LARGE SCALE GENOMIC DNA]</scope>
    <source>
        <strain>F2365</strain>
    </source>
</reference>
<protein>
    <recommendedName>
        <fullName evidence="1">Type III pantothenate kinase</fullName>
        <ecNumber evidence="1">2.7.1.33</ecNumber>
    </recommendedName>
    <alternativeName>
        <fullName evidence="1">PanK-III</fullName>
    </alternativeName>
    <alternativeName>
        <fullName evidence="1">Pantothenic acid kinase</fullName>
    </alternativeName>
</protein>
<accession>Q724J2</accession>
<proteinExistence type="inferred from homology"/>
<sequence>MILVIDVGNTNCTVGVYEKQKLLKHWRMTTDRHRTSDELGMTVLNFFSYANLTPSDIQGIIISSVVPPIMHAMETMCVRYFNIRPLIVGPGIKTGLNLKVDNPREIGSDRIVNAVAASEEYGTPVIVVDFGTATTFCYIDESGVYQGGAIAPGIMISTEALYNRAAKLPRVDIAESNQIIGKSTVASMQAGIFYGFVGQCEGIIAEIKKQSNASPVVVATGGLARMITEKSSAVDILDPFLTLKGLELLYRRNKPTTEK</sequence>
<dbReference type="EC" id="2.7.1.33" evidence="1"/>
<dbReference type="EMBL" id="AE017262">
    <property type="protein sequence ID" value="AAT03019.1"/>
    <property type="molecule type" value="Genomic_DNA"/>
</dbReference>
<dbReference type="RefSeq" id="WP_003725746.1">
    <property type="nucleotide sequence ID" value="NC_002973.6"/>
</dbReference>
<dbReference type="SMR" id="Q724J2"/>
<dbReference type="KEGG" id="lmf:LMOf2365_0232"/>
<dbReference type="HOGENOM" id="CLU_066627_1_0_9"/>
<dbReference type="UniPathway" id="UPA00241">
    <property type="reaction ID" value="UER00352"/>
</dbReference>
<dbReference type="GO" id="GO:0005737">
    <property type="term" value="C:cytoplasm"/>
    <property type="evidence" value="ECO:0007669"/>
    <property type="project" value="UniProtKB-SubCell"/>
</dbReference>
<dbReference type="GO" id="GO:0005524">
    <property type="term" value="F:ATP binding"/>
    <property type="evidence" value="ECO:0007669"/>
    <property type="project" value="UniProtKB-UniRule"/>
</dbReference>
<dbReference type="GO" id="GO:0046872">
    <property type="term" value="F:metal ion binding"/>
    <property type="evidence" value="ECO:0007669"/>
    <property type="project" value="UniProtKB-KW"/>
</dbReference>
<dbReference type="GO" id="GO:0004594">
    <property type="term" value="F:pantothenate kinase activity"/>
    <property type="evidence" value="ECO:0007669"/>
    <property type="project" value="UniProtKB-UniRule"/>
</dbReference>
<dbReference type="GO" id="GO:0015937">
    <property type="term" value="P:coenzyme A biosynthetic process"/>
    <property type="evidence" value="ECO:0007669"/>
    <property type="project" value="UniProtKB-UniRule"/>
</dbReference>
<dbReference type="CDD" id="cd24015">
    <property type="entry name" value="ASKHA_NBD_PanK-III"/>
    <property type="match status" value="1"/>
</dbReference>
<dbReference type="Gene3D" id="3.30.420.40">
    <property type="match status" value="2"/>
</dbReference>
<dbReference type="HAMAP" id="MF_01274">
    <property type="entry name" value="Pantothen_kinase_3"/>
    <property type="match status" value="1"/>
</dbReference>
<dbReference type="InterPro" id="IPR043129">
    <property type="entry name" value="ATPase_NBD"/>
</dbReference>
<dbReference type="InterPro" id="IPR004619">
    <property type="entry name" value="Type_III_PanK"/>
</dbReference>
<dbReference type="NCBIfam" id="TIGR00671">
    <property type="entry name" value="baf"/>
    <property type="match status" value="1"/>
</dbReference>
<dbReference type="NCBIfam" id="NF009843">
    <property type="entry name" value="PRK13318.1-1"/>
    <property type="match status" value="1"/>
</dbReference>
<dbReference type="NCBIfam" id="NF009847">
    <property type="entry name" value="PRK13318.1-5"/>
    <property type="match status" value="1"/>
</dbReference>
<dbReference type="NCBIfam" id="NF009848">
    <property type="entry name" value="PRK13318.1-6"/>
    <property type="match status" value="1"/>
</dbReference>
<dbReference type="NCBIfam" id="NF009855">
    <property type="entry name" value="PRK13321.1"/>
    <property type="match status" value="1"/>
</dbReference>
<dbReference type="PANTHER" id="PTHR34265">
    <property type="entry name" value="TYPE III PANTOTHENATE KINASE"/>
    <property type="match status" value="1"/>
</dbReference>
<dbReference type="PANTHER" id="PTHR34265:SF1">
    <property type="entry name" value="TYPE III PANTOTHENATE KINASE"/>
    <property type="match status" value="1"/>
</dbReference>
<dbReference type="Pfam" id="PF03309">
    <property type="entry name" value="Pan_kinase"/>
    <property type="match status" value="1"/>
</dbReference>
<dbReference type="SUPFAM" id="SSF53067">
    <property type="entry name" value="Actin-like ATPase domain"/>
    <property type="match status" value="2"/>
</dbReference>
<feature type="chain" id="PRO_0000267558" description="Type III pantothenate kinase">
    <location>
        <begin position="1"/>
        <end position="259"/>
    </location>
</feature>
<feature type="active site" description="Proton acceptor" evidence="1">
    <location>
        <position position="109"/>
    </location>
</feature>
<feature type="binding site" evidence="1">
    <location>
        <begin position="6"/>
        <end position="13"/>
    </location>
    <ligand>
        <name>ATP</name>
        <dbReference type="ChEBI" id="CHEBI:30616"/>
    </ligand>
</feature>
<feature type="binding site" evidence="1">
    <location>
        <begin position="107"/>
        <end position="110"/>
    </location>
    <ligand>
        <name>substrate</name>
    </ligand>
</feature>
<feature type="binding site" evidence="1">
    <location>
        <position position="129"/>
    </location>
    <ligand>
        <name>K(+)</name>
        <dbReference type="ChEBI" id="CHEBI:29103"/>
    </ligand>
</feature>
<feature type="binding site" evidence="1">
    <location>
        <position position="132"/>
    </location>
    <ligand>
        <name>ATP</name>
        <dbReference type="ChEBI" id="CHEBI:30616"/>
    </ligand>
</feature>
<feature type="binding site" evidence="1">
    <location>
        <position position="184"/>
    </location>
    <ligand>
        <name>substrate</name>
    </ligand>
</feature>
<comment type="function">
    <text evidence="1">Catalyzes the phosphorylation of pantothenate (Pan), the first step in CoA biosynthesis.</text>
</comment>
<comment type="catalytic activity">
    <reaction evidence="1">
        <text>(R)-pantothenate + ATP = (R)-4'-phosphopantothenate + ADP + H(+)</text>
        <dbReference type="Rhea" id="RHEA:16373"/>
        <dbReference type="ChEBI" id="CHEBI:10986"/>
        <dbReference type="ChEBI" id="CHEBI:15378"/>
        <dbReference type="ChEBI" id="CHEBI:29032"/>
        <dbReference type="ChEBI" id="CHEBI:30616"/>
        <dbReference type="ChEBI" id="CHEBI:456216"/>
        <dbReference type="EC" id="2.7.1.33"/>
    </reaction>
</comment>
<comment type="cofactor">
    <cofactor evidence="1">
        <name>NH4(+)</name>
        <dbReference type="ChEBI" id="CHEBI:28938"/>
    </cofactor>
    <cofactor evidence="1">
        <name>K(+)</name>
        <dbReference type="ChEBI" id="CHEBI:29103"/>
    </cofactor>
    <text evidence="1">A monovalent cation. Ammonium or potassium.</text>
</comment>
<comment type="pathway">
    <text evidence="1">Cofactor biosynthesis; coenzyme A biosynthesis; CoA from (R)-pantothenate: step 1/5.</text>
</comment>
<comment type="subunit">
    <text evidence="1">Homodimer.</text>
</comment>
<comment type="subcellular location">
    <subcellularLocation>
        <location evidence="1">Cytoplasm</location>
    </subcellularLocation>
</comment>
<comment type="similarity">
    <text evidence="1">Belongs to the type III pantothenate kinase family.</text>
</comment>
<gene>
    <name evidence="1" type="primary">coaX</name>
    <name type="ordered locus">LMOf2365_0232</name>
</gene>
<name>COAX_LISMF</name>